<sequence>MEIVINNISGLNNSFNNNNNSNNNDENEINFNLIKESIVNFKLWDINNKQIEYVCRLGSGSLCRVYKGRLNGKPVAIKVFSPIRFEEFKTEFLMMQSLRSSPFLISFYGVSIVEEPQKQCYCIITEFCSRDSLYHIMTDRLIEIGWNRFFQFSMQIILGLQSLHNRKPKPIVHRDVTSLNILVNEDWECKISNFSASRFNCLNTEYINSNNQNKSFAFCSPESSDFQDIDDDYTSLSSSITSKSDIYSFGIIMFELISRIINGEYSHPFSEFKDIKNDFQLLLSSKNGLRPSLPNICPEPLEKLYKQCVDQSPLNRPSCEEVIISLNQIRSFYLLPQTKKSWDNLVLKNKCK</sequence>
<proteinExistence type="inferred from homology"/>
<keyword id="KW-0067">ATP-binding</keyword>
<keyword id="KW-0418">Kinase</keyword>
<keyword id="KW-0547">Nucleotide-binding</keyword>
<keyword id="KW-1185">Reference proteome</keyword>
<keyword id="KW-0808">Transferase</keyword>
<keyword id="KW-0829">Tyrosine-protein kinase</keyword>
<reference key="1">
    <citation type="journal article" date="2005" name="Nature">
        <title>The genome of the social amoeba Dictyostelium discoideum.</title>
        <authorList>
            <person name="Eichinger L."/>
            <person name="Pachebat J.A."/>
            <person name="Gloeckner G."/>
            <person name="Rajandream M.A."/>
            <person name="Sucgang R."/>
            <person name="Berriman M."/>
            <person name="Song J."/>
            <person name="Olsen R."/>
            <person name="Szafranski K."/>
            <person name="Xu Q."/>
            <person name="Tunggal B."/>
            <person name="Kummerfeld S."/>
            <person name="Madera M."/>
            <person name="Konfortov B.A."/>
            <person name="Rivero F."/>
            <person name="Bankier A.T."/>
            <person name="Lehmann R."/>
            <person name="Hamlin N."/>
            <person name="Davies R."/>
            <person name="Gaudet P."/>
            <person name="Fey P."/>
            <person name="Pilcher K."/>
            <person name="Chen G."/>
            <person name="Saunders D."/>
            <person name="Sodergren E.J."/>
            <person name="Davis P."/>
            <person name="Kerhornou A."/>
            <person name="Nie X."/>
            <person name="Hall N."/>
            <person name="Anjard C."/>
            <person name="Hemphill L."/>
            <person name="Bason N."/>
            <person name="Farbrother P."/>
            <person name="Desany B."/>
            <person name="Just E."/>
            <person name="Morio T."/>
            <person name="Rost R."/>
            <person name="Churcher C.M."/>
            <person name="Cooper J."/>
            <person name="Haydock S."/>
            <person name="van Driessche N."/>
            <person name="Cronin A."/>
            <person name="Goodhead I."/>
            <person name="Muzny D.M."/>
            <person name="Mourier T."/>
            <person name="Pain A."/>
            <person name="Lu M."/>
            <person name="Harper D."/>
            <person name="Lindsay R."/>
            <person name="Hauser H."/>
            <person name="James K.D."/>
            <person name="Quiles M."/>
            <person name="Madan Babu M."/>
            <person name="Saito T."/>
            <person name="Buchrieser C."/>
            <person name="Wardroper A."/>
            <person name="Felder M."/>
            <person name="Thangavelu M."/>
            <person name="Johnson D."/>
            <person name="Knights A."/>
            <person name="Loulseged H."/>
            <person name="Mungall K.L."/>
            <person name="Oliver K."/>
            <person name="Price C."/>
            <person name="Quail M.A."/>
            <person name="Urushihara H."/>
            <person name="Hernandez J."/>
            <person name="Rabbinowitsch E."/>
            <person name="Steffen D."/>
            <person name="Sanders M."/>
            <person name="Ma J."/>
            <person name="Kohara Y."/>
            <person name="Sharp S."/>
            <person name="Simmonds M.N."/>
            <person name="Spiegler S."/>
            <person name="Tivey A."/>
            <person name="Sugano S."/>
            <person name="White B."/>
            <person name="Walker D."/>
            <person name="Woodward J.R."/>
            <person name="Winckler T."/>
            <person name="Tanaka Y."/>
            <person name="Shaulsky G."/>
            <person name="Schleicher M."/>
            <person name="Weinstock G.M."/>
            <person name="Rosenthal A."/>
            <person name="Cox E.C."/>
            <person name="Chisholm R.L."/>
            <person name="Gibbs R.A."/>
            <person name="Loomis W.F."/>
            <person name="Platzer M."/>
            <person name="Kay R.R."/>
            <person name="Williams J.G."/>
            <person name="Dear P.H."/>
            <person name="Noegel A.A."/>
            <person name="Barrell B.G."/>
            <person name="Kuspa A."/>
        </authorList>
    </citation>
    <scope>NUCLEOTIDE SEQUENCE [LARGE SCALE GENOMIC DNA]</scope>
    <source>
        <strain>AX4</strain>
    </source>
</reference>
<feature type="chain" id="PRO_0000355145" description="Probable tyrosine-protein kinase DDB_G0290471">
    <location>
        <begin position="1"/>
        <end position="352"/>
    </location>
</feature>
<feature type="domain" description="Protein kinase" evidence="1">
    <location>
        <begin position="51"/>
        <end position="333"/>
    </location>
</feature>
<feature type="active site" description="Proton acceptor" evidence="1 2">
    <location>
        <position position="175"/>
    </location>
</feature>
<feature type="binding site" evidence="1">
    <location>
        <begin position="57"/>
        <end position="65"/>
    </location>
    <ligand>
        <name>ATP</name>
        <dbReference type="ChEBI" id="CHEBI:30616"/>
    </ligand>
</feature>
<feature type="binding site" evidence="1">
    <location>
        <position position="78"/>
    </location>
    <ligand>
        <name>ATP</name>
        <dbReference type="ChEBI" id="CHEBI:30616"/>
    </ligand>
</feature>
<protein>
    <recommendedName>
        <fullName>Probable tyrosine-protein kinase DDB_G0290471</fullName>
        <ecNumber>2.7.10.2</ecNumber>
    </recommendedName>
</protein>
<gene>
    <name type="ORF">DDB_G0290471</name>
</gene>
<evidence type="ECO:0000255" key="1">
    <source>
        <dbReference type="PROSITE-ProRule" id="PRU00159"/>
    </source>
</evidence>
<evidence type="ECO:0000255" key="2">
    <source>
        <dbReference type="PROSITE-ProRule" id="PRU10028"/>
    </source>
</evidence>
<evidence type="ECO:0000305" key="3"/>
<name>YTYK1_DICDI</name>
<accession>Q54G28</accession>
<organism>
    <name type="scientific">Dictyostelium discoideum</name>
    <name type="common">Social amoeba</name>
    <dbReference type="NCBI Taxonomy" id="44689"/>
    <lineage>
        <taxon>Eukaryota</taxon>
        <taxon>Amoebozoa</taxon>
        <taxon>Evosea</taxon>
        <taxon>Eumycetozoa</taxon>
        <taxon>Dictyostelia</taxon>
        <taxon>Dictyosteliales</taxon>
        <taxon>Dictyosteliaceae</taxon>
        <taxon>Dictyostelium</taxon>
    </lineage>
</organism>
<dbReference type="EC" id="2.7.10.2"/>
<dbReference type="EMBL" id="AAFI02000163">
    <property type="protein sequence ID" value="EAL62251.1"/>
    <property type="molecule type" value="Genomic_DNA"/>
</dbReference>
<dbReference type="RefSeq" id="XP_635744.1">
    <property type="nucleotide sequence ID" value="XM_630652.1"/>
</dbReference>
<dbReference type="SMR" id="Q54G28"/>
<dbReference type="STRING" id="44689.Q54G28"/>
<dbReference type="PaxDb" id="44689-DDB0229850"/>
<dbReference type="EnsemblProtists" id="EAL62251">
    <property type="protein sequence ID" value="EAL62251"/>
    <property type="gene ID" value="DDB_G0290471"/>
</dbReference>
<dbReference type="GeneID" id="8627663"/>
<dbReference type="KEGG" id="ddi:DDB_G0290471"/>
<dbReference type="dictyBase" id="DDB_G0290471"/>
<dbReference type="VEuPathDB" id="AmoebaDB:DDB_G0290471"/>
<dbReference type="eggNOG" id="KOG0192">
    <property type="taxonomic scope" value="Eukaryota"/>
</dbReference>
<dbReference type="HOGENOM" id="CLU_788522_0_0_1"/>
<dbReference type="InParanoid" id="Q54G28"/>
<dbReference type="OMA" id="CCEDIFT"/>
<dbReference type="PhylomeDB" id="Q54G28"/>
<dbReference type="Reactome" id="R-DDI-5673000">
    <property type="pathway name" value="RAF activation"/>
</dbReference>
<dbReference type="Reactome" id="R-DDI-5675221">
    <property type="pathway name" value="Negative regulation of MAPK pathway"/>
</dbReference>
<dbReference type="PRO" id="PR:Q54G28"/>
<dbReference type="Proteomes" id="UP000002195">
    <property type="component" value="Chromosome 5"/>
</dbReference>
<dbReference type="GO" id="GO:0005737">
    <property type="term" value="C:cytoplasm"/>
    <property type="evidence" value="ECO:0000318"/>
    <property type="project" value="GO_Central"/>
</dbReference>
<dbReference type="GO" id="GO:0005524">
    <property type="term" value="F:ATP binding"/>
    <property type="evidence" value="ECO:0007669"/>
    <property type="project" value="UniProtKB-KW"/>
</dbReference>
<dbReference type="GO" id="GO:0004715">
    <property type="term" value="F:non-membrane spanning protein tyrosine kinase activity"/>
    <property type="evidence" value="ECO:0007669"/>
    <property type="project" value="UniProtKB-EC"/>
</dbReference>
<dbReference type="GO" id="GO:0004672">
    <property type="term" value="F:protein kinase activity"/>
    <property type="evidence" value="ECO:0000318"/>
    <property type="project" value="GO_Central"/>
</dbReference>
<dbReference type="GO" id="GO:0007165">
    <property type="term" value="P:signal transduction"/>
    <property type="evidence" value="ECO:0000318"/>
    <property type="project" value="GO_Central"/>
</dbReference>
<dbReference type="Gene3D" id="3.30.200.20">
    <property type="entry name" value="Phosphorylase Kinase, domain 1"/>
    <property type="match status" value="1"/>
</dbReference>
<dbReference type="Gene3D" id="1.10.510.10">
    <property type="entry name" value="Transferase(Phosphotransferase) domain 1"/>
    <property type="match status" value="1"/>
</dbReference>
<dbReference type="InterPro" id="IPR011009">
    <property type="entry name" value="Kinase-like_dom_sf"/>
</dbReference>
<dbReference type="InterPro" id="IPR000719">
    <property type="entry name" value="Prot_kinase_dom"/>
</dbReference>
<dbReference type="InterPro" id="IPR001245">
    <property type="entry name" value="Ser-Thr/Tyr_kinase_cat_dom"/>
</dbReference>
<dbReference type="InterPro" id="IPR051681">
    <property type="entry name" value="Ser/Thr_Kinases-Pseudokinases"/>
</dbReference>
<dbReference type="InterPro" id="IPR008266">
    <property type="entry name" value="Tyr_kinase_AS"/>
</dbReference>
<dbReference type="PANTHER" id="PTHR44329:SF288">
    <property type="entry name" value="MITOGEN-ACTIVATED PROTEIN KINASE KINASE KINASE 20"/>
    <property type="match status" value="1"/>
</dbReference>
<dbReference type="PANTHER" id="PTHR44329">
    <property type="entry name" value="SERINE/THREONINE-PROTEIN KINASE TNNI3K-RELATED"/>
    <property type="match status" value="1"/>
</dbReference>
<dbReference type="Pfam" id="PF07714">
    <property type="entry name" value="PK_Tyr_Ser-Thr"/>
    <property type="match status" value="1"/>
</dbReference>
<dbReference type="PIRSF" id="PIRSF000654">
    <property type="entry name" value="Integrin-linked_kinase"/>
    <property type="match status" value="1"/>
</dbReference>
<dbReference type="SUPFAM" id="SSF56112">
    <property type="entry name" value="Protein kinase-like (PK-like)"/>
    <property type="match status" value="1"/>
</dbReference>
<dbReference type="PROSITE" id="PS50011">
    <property type="entry name" value="PROTEIN_KINASE_DOM"/>
    <property type="match status" value="1"/>
</dbReference>
<dbReference type="PROSITE" id="PS00109">
    <property type="entry name" value="PROTEIN_KINASE_TYR"/>
    <property type="match status" value="1"/>
</dbReference>
<comment type="catalytic activity">
    <reaction evidence="2">
        <text>L-tyrosyl-[protein] + ATP = O-phospho-L-tyrosyl-[protein] + ADP + H(+)</text>
        <dbReference type="Rhea" id="RHEA:10596"/>
        <dbReference type="Rhea" id="RHEA-COMP:10136"/>
        <dbReference type="Rhea" id="RHEA-COMP:20101"/>
        <dbReference type="ChEBI" id="CHEBI:15378"/>
        <dbReference type="ChEBI" id="CHEBI:30616"/>
        <dbReference type="ChEBI" id="CHEBI:46858"/>
        <dbReference type="ChEBI" id="CHEBI:61978"/>
        <dbReference type="ChEBI" id="CHEBI:456216"/>
        <dbReference type="EC" id="2.7.10.2"/>
    </reaction>
</comment>
<comment type="similarity">
    <text evidence="3">Belongs to the protein kinase superfamily. TKL Tyr protein kinase family.</text>
</comment>